<dbReference type="EMBL" id="CU329672">
    <property type="protein sequence ID" value="CAA20702.2"/>
    <property type="molecule type" value="Genomic_DNA"/>
</dbReference>
<dbReference type="PIR" id="T41671">
    <property type="entry name" value="T41671"/>
</dbReference>
<dbReference type="RefSeq" id="NP_587846.2">
    <property type="nucleotide sequence ID" value="NM_001022839.2"/>
</dbReference>
<dbReference type="SMR" id="O74562"/>
<dbReference type="BioGRID" id="275972">
    <property type="interactions" value="17"/>
</dbReference>
<dbReference type="FunCoup" id="O74562">
    <property type="interactions" value="29"/>
</dbReference>
<dbReference type="STRING" id="284812.O74562"/>
<dbReference type="iPTMnet" id="O74562"/>
<dbReference type="PaxDb" id="4896-SPCC970.09.1"/>
<dbReference type="EnsemblFungi" id="SPCC970.09.1">
    <property type="protein sequence ID" value="SPCC970.09.1:pep"/>
    <property type="gene ID" value="SPCC970.09"/>
</dbReference>
<dbReference type="PomBase" id="SPCC970.09">
    <property type="gene designation" value="sec8"/>
</dbReference>
<dbReference type="VEuPathDB" id="FungiDB:SPCC970.09"/>
<dbReference type="eggNOG" id="KOG3691">
    <property type="taxonomic scope" value="Eukaryota"/>
</dbReference>
<dbReference type="HOGENOM" id="CLU_288715_0_0_1"/>
<dbReference type="InParanoid" id="O74562"/>
<dbReference type="OMA" id="HMEVRCR"/>
<dbReference type="PRO" id="PR:O74562"/>
<dbReference type="Proteomes" id="UP000002485">
    <property type="component" value="Chromosome III"/>
</dbReference>
<dbReference type="GO" id="GO:1902716">
    <property type="term" value="C:cell cortex of growing cell tip"/>
    <property type="evidence" value="ECO:0000314"/>
    <property type="project" value="PomBase"/>
</dbReference>
<dbReference type="GO" id="GO:0032153">
    <property type="term" value="C:cell division site"/>
    <property type="evidence" value="ECO:0000314"/>
    <property type="project" value="PomBase"/>
</dbReference>
<dbReference type="GO" id="GO:0051286">
    <property type="term" value="C:cell tip"/>
    <property type="evidence" value="ECO:0000314"/>
    <property type="project" value="PomBase"/>
</dbReference>
<dbReference type="GO" id="GO:0005737">
    <property type="term" value="C:cytoplasm"/>
    <property type="evidence" value="ECO:0007005"/>
    <property type="project" value="PomBase"/>
</dbReference>
<dbReference type="GO" id="GO:0031410">
    <property type="term" value="C:cytoplasmic vesicle"/>
    <property type="evidence" value="ECO:0007669"/>
    <property type="project" value="UniProtKB-KW"/>
</dbReference>
<dbReference type="GO" id="GO:0005829">
    <property type="term" value="C:cytosol"/>
    <property type="evidence" value="ECO:0007005"/>
    <property type="project" value="PomBase"/>
</dbReference>
<dbReference type="GO" id="GO:0000145">
    <property type="term" value="C:exocyst"/>
    <property type="evidence" value="ECO:0000318"/>
    <property type="project" value="GO_Central"/>
</dbReference>
<dbReference type="GO" id="GO:0090619">
    <property type="term" value="C:meiotic spindle pole"/>
    <property type="evidence" value="ECO:0000314"/>
    <property type="project" value="PomBase"/>
</dbReference>
<dbReference type="GO" id="GO:0110085">
    <property type="term" value="C:mitotic actomyosin contractile ring"/>
    <property type="evidence" value="ECO:0000314"/>
    <property type="project" value="PomBase"/>
</dbReference>
<dbReference type="GO" id="GO:0032120">
    <property type="term" value="P:ascospore-type prospore membrane formation"/>
    <property type="evidence" value="ECO:0000315"/>
    <property type="project" value="PomBase"/>
</dbReference>
<dbReference type="GO" id="GO:0000917">
    <property type="term" value="P:division septum assembly"/>
    <property type="evidence" value="ECO:0007669"/>
    <property type="project" value="UniProtKB-KW"/>
</dbReference>
<dbReference type="GO" id="GO:0006897">
    <property type="term" value="P:endocytosis"/>
    <property type="evidence" value="ECO:0000315"/>
    <property type="project" value="PomBase"/>
</dbReference>
<dbReference type="GO" id="GO:0006887">
    <property type="term" value="P:exocytosis"/>
    <property type="evidence" value="ECO:0000315"/>
    <property type="project" value="PomBase"/>
</dbReference>
<dbReference type="GO" id="GO:0006893">
    <property type="term" value="P:Golgi to plasma membrane transport"/>
    <property type="evidence" value="ECO:0000318"/>
    <property type="project" value="GO_Central"/>
</dbReference>
<dbReference type="GO" id="GO:0006886">
    <property type="term" value="P:intracellular protein transport"/>
    <property type="evidence" value="ECO:0000305"/>
    <property type="project" value="PomBase"/>
</dbReference>
<dbReference type="GO" id="GO:0006904">
    <property type="term" value="P:vesicle docking involved in exocytosis"/>
    <property type="evidence" value="ECO:0007669"/>
    <property type="project" value="InterPro"/>
</dbReference>
<dbReference type="GO" id="GO:0090522">
    <property type="term" value="P:vesicle tethering involved in exocytosis"/>
    <property type="evidence" value="ECO:0000305"/>
    <property type="project" value="PomBase"/>
</dbReference>
<dbReference type="InterPro" id="IPR039682">
    <property type="entry name" value="Sec8/EXOC4"/>
</dbReference>
<dbReference type="InterPro" id="IPR007191">
    <property type="entry name" value="Sec8_exocyst_N"/>
</dbReference>
<dbReference type="InterPro" id="IPR048630">
    <property type="entry name" value="Sec8_M"/>
</dbReference>
<dbReference type="PANTHER" id="PTHR14146">
    <property type="entry name" value="EXOCYST COMPLEX COMPONENT 4"/>
    <property type="match status" value="1"/>
</dbReference>
<dbReference type="PANTHER" id="PTHR14146:SF0">
    <property type="entry name" value="EXOCYST COMPLEX COMPONENT 4"/>
    <property type="match status" value="1"/>
</dbReference>
<dbReference type="Pfam" id="PF20652">
    <property type="entry name" value="Sec8_C"/>
    <property type="match status" value="1"/>
</dbReference>
<dbReference type="Pfam" id="PF04048">
    <property type="entry name" value="Sec8_N"/>
    <property type="match status" value="1"/>
</dbReference>
<keyword id="KW-0131">Cell cycle</keyword>
<keyword id="KW-0132">Cell division</keyword>
<keyword id="KW-0963">Cytoplasm</keyword>
<keyword id="KW-0968">Cytoplasmic vesicle</keyword>
<keyword id="KW-0206">Cytoskeleton</keyword>
<keyword id="KW-0268">Exocytosis</keyword>
<keyword id="KW-0597">Phosphoprotein</keyword>
<keyword id="KW-0653">Protein transport</keyword>
<keyword id="KW-1185">Reference proteome</keyword>
<keyword id="KW-0717">Septation</keyword>
<keyword id="KW-0813">Transport</keyword>
<name>SEC8_SCHPO</name>
<gene>
    <name type="primary">sec8</name>
    <name type="ORF">SPCC970.09</name>
</gene>
<organism>
    <name type="scientific">Schizosaccharomyces pombe (strain 972 / ATCC 24843)</name>
    <name type="common">Fission yeast</name>
    <dbReference type="NCBI Taxonomy" id="284812"/>
    <lineage>
        <taxon>Eukaryota</taxon>
        <taxon>Fungi</taxon>
        <taxon>Dikarya</taxon>
        <taxon>Ascomycota</taxon>
        <taxon>Taphrinomycotina</taxon>
        <taxon>Schizosaccharomycetes</taxon>
        <taxon>Schizosaccharomycetales</taxon>
        <taxon>Schizosaccharomycetaceae</taxon>
        <taxon>Schizosaccharomyces</taxon>
    </lineage>
</organism>
<sequence length="1073" mass="122975">MDTRGYSETKKGRYPVGKKSLESPNGYSNYGTSMDNELSSEYASRGMHIGDLENLVNEIEDEWKDLGREDYQPISTALELLDDSSFGRDYKSFLNVYDRISAALQTIAHTHKDDFTRGISAYGEIMEGIQKCNSRIIALKQSLEASQECIGNTNSKELQQTLARSSQYKKVISVLKELNEANQLFDNFHTLVDSKQYYHASDLIRRVWDELSRSDFDGILVVEQFKSRMTGLLSHLEDILSEELVSITFLKDAVAYPIVSYCSPNPLRETSNPYFLRDFLKNNANTSTLGQSEQLRYLEEALSLKLSDCLKMDYGRDSLRDIRIVLESLNLLGKLPNAISSLKSRTSAEMFTTVDSTSRAIVNKYSLGNNVSTVNPFSKSLYDIGLHAETDREHTMISEFLTNLFTKLRCVLMHYRGISEFMTKLETKTPKHASSSHKSSIMSVNSDPTSPKVSKFDTSDSTFPFDTLLQAFESEIRLMLKDYLISKEEYIENSGNFVVGTEMSIYNLPGENEEDKLFDVTNEIAVENKSNAFYARINELVNEKAPELILNKSNASVSTIELFSGSSKEIVRLAGHVVFVGPSVFHASSVLPQTVFFLEDSVSILKNPNIPPQFAVNFMKEFLRGSYIPQLYKFMSSHFDTIMKDVGAFQLHRDWKIYSKIPIFKCHVAIVQYFHDLQDYLPIVALNLVEFYELLHTLLVRFRNHCSDYLSDLCRTAVLKEYKHVNEDTEDVDDTVRVKLLHDDVTYPQFIKFLKQKNPSLEGLNELCRMENKRLLQYEDRAITSEVKLPVSVLSKDSDLVNSVSYLHNSMEWFLQRCFSRFMNGSRRMNVLQQNQANFGGDFLPIDNLLGNNSDLMKGAYKEVFDSLQRLQFDALLLIRMEVRLQYIHSINQSVNLPDYVVEYRGRPDASIMALNSTIVTTNLKLETCLNEWERRFVFQGLSELVDSSLYSIFYKIESMNRGSCLQMLKNMSAMIQILKTVKEIHGDVEFPKSSRVFGIYQNGAKKIIEHFIAAPKKELLPDVKQMVRIYYQRLMKDAKRNGRDDLYRQYQKKIGSVLTQFDNTVGGARKNP</sequence>
<comment type="function">
    <text evidence="2 3 4 6 9">Component of the exocyst complex involved in the delivery of secretory vesicles to the plasma membrane. Also required for polarized cell growth and division septum assembly. The exocyst complex plays an important role in the targeting of rho3, as well as the two main hydrolases required for cell separation, eng1 and agn1, to the cell wall surrounding the septum before cell separation begins.</text>
</comment>
<comment type="subunit">
    <text evidence="2">Component of the exocyst complex composed of sec3, sec5, sec6, sec8, sec10, sec15 and exo70.</text>
</comment>
<comment type="subcellular location">
    <subcellularLocation>
        <location evidence="5 7">Cytoplasm</location>
    </subcellularLocation>
    <subcellularLocation>
        <location evidence="2">Cell tip</location>
    </subcellularLocation>
    <subcellularLocation>
        <location evidence="2">Cytoplasm</location>
        <location evidence="2">Cytoskeleton</location>
    </subcellularLocation>
    <subcellularLocation>
        <location evidence="5">Cytoplasmic vesicle</location>
    </subcellularLocation>
    <text evidence="2">Associated with the actinomyosin ring at the division site and at the cell tips.</text>
</comment>
<proteinExistence type="evidence at protein level"/>
<evidence type="ECO:0000256" key="1">
    <source>
        <dbReference type="SAM" id="MobiDB-lite"/>
    </source>
</evidence>
<evidence type="ECO:0000269" key="2">
    <source>
    </source>
</evidence>
<evidence type="ECO:0000269" key="3">
    <source>
    </source>
</evidence>
<evidence type="ECO:0000269" key="4">
    <source>
    </source>
</evidence>
<evidence type="ECO:0000269" key="5">
    <source>
    </source>
</evidence>
<evidence type="ECO:0000269" key="6">
    <source>
    </source>
</evidence>
<evidence type="ECO:0000269" key="7">
    <source>
    </source>
</evidence>
<evidence type="ECO:0000269" key="8">
    <source>
    </source>
</evidence>
<evidence type="ECO:0000269" key="9">
    <source>
    </source>
</evidence>
<protein>
    <recommendedName>
        <fullName>Exocyst complex component sec8</fullName>
    </recommendedName>
</protein>
<feature type="chain" id="PRO_0000118941" description="Exocyst complex component sec8">
    <location>
        <begin position="1"/>
        <end position="1073"/>
    </location>
</feature>
<feature type="region of interest" description="Disordered" evidence="1">
    <location>
        <begin position="1"/>
        <end position="33"/>
    </location>
</feature>
<feature type="compositionally biased region" description="Basic and acidic residues" evidence="1">
    <location>
        <begin position="1"/>
        <end position="11"/>
    </location>
</feature>
<feature type="compositionally biased region" description="Polar residues" evidence="1">
    <location>
        <begin position="22"/>
        <end position="33"/>
    </location>
</feature>
<feature type="modified residue" description="Phosphothreonine" evidence="8">
    <location>
        <position position="449"/>
    </location>
</feature>
<feature type="modified residue" description="Phosphoserine" evidence="8">
    <location>
        <position position="450"/>
    </location>
</feature>
<accession>O74562</accession>
<reference key="1">
    <citation type="journal article" date="2002" name="Mol. Biol. Cell">
        <title>The multiprotein exocyst complex is essential for cell separation in Schizosaccharomyces pombe.</title>
        <authorList>
            <person name="Wang H."/>
            <person name="Tang X."/>
            <person name="Liu J."/>
            <person name="Trautmann S."/>
            <person name="Balasundaram D."/>
            <person name="McCollum D."/>
            <person name="Balasubramanian M.K."/>
        </authorList>
    </citation>
    <scope>NUCLEOTIDE SEQUENCE [GENOMIC DNA]</scope>
    <scope>FUNCTION</scope>
    <scope>SUBCELLULAR LOCATION</scope>
    <scope>IDENTIFICATION IN THE EXOCYST COMPLEX</scope>
</reference>
<reference key="2">
    <citation type="journal article" date="2002" name="Nature">
        <title>The genome sequence of Schizosaccharomyces pombe.</title>
        <authorList>
            <person name="Wood V."/>
            <person name="Gwilliam R."/>
            <person name="Rajandream M.A."/>
            <person name="Lyne M.H."/>
            <person name="Lyne R."/>
            <person name="Stewart A."/>
            <person name="Sgouros J.G."/>
            <person name="Peat N."/>
            <person name="Hayles J."/>
            <person name="Baker S.G."/>
            <person name="Basham D."/>
            <person name="Bowman S."/>
            <person name="Brooks K."/>
            <person name="Brown D."/>
            <person name="Brown S."/>
            <person name="Chillingworth T."/>
            <person name="Churcher C.M."/>
            <person name="Collins M."/>
            <person name="Connor R."/>
            <person name="Cronin A."/>
            <person name="Davis P."/>
            <person name="Feltwell T."/>
            <person name="Fraser A."/>
            <person name="Gentles S."/>
            <person name="Goble A."/>
            <person name="Hamlin N."/>
            <person name="Harris D.E."/>
            <person name="Hidalgo J."/>
            <person name="Hodgson G."/>
            <person name="Holroyd S."/>
            <person name="Hornsby T."/>
            <person name="Howarth S."/>
            <person name="Huckle E.J."/>
            <person name="Hunt S."/>
            <person name="Jagels K."/>
            <person name="James K.D."/>
            <person name="Jones L."/>
            <person name="Jones M."/>
            <person name="Leather S."/>
            <person name="McDonald S."/>
            <person name="McLean J."/>
            <person name="Mooney P."/>
            <person name="Moule S."/>
            <person name="Mungall K.L."/>
            <person name="Murphy L.D."/>
            <person name="Niblett D."/>
            <person name="Odell C."/>
            <person name="Oliver K."/>
            <person name="O'Neil S."/>
            <person name="Pearson D."/>
            <person name="Quail M.A."/>
            <person name="Rabbinowitsch E."/>
            <person name="Rutherford K.M."/>
            <person name="Rutter S."/>
            <person name="Saunders D."/>
            <person name="Seeger K."/>
            <person name="Sharp S."/>
            <person name="Skelton J."/>
            <person name="Simmonds M.N."/>
            <person name="Squares R."/>
            <person name="Squares S."/>
            <person name="Stevens K."/>
            <person name="Taylor K."/>
            <person name="Taylor R.G."/>
            <person name="Tivey A."/>
            <person name="Walsh S.V."/>
            <person name="Warren T."/>
            <person name="Whitehead S."/>
            <person name="Woodward J.R."/>
            <person name="Volckaert G."/>
            <person name="Aert R."/>
            <person name="Robben J."/>
            <person name="Grymonprez B."/>
            <person name="Weltjens I."/>
            <person name="Vanstreels E."/>
            <person name="Rieger M."/>
            <person name="Schaefer M."/>
            <person name="Mueller-Auer S."/>
            <person name="Gabel C."/>
            <person name="Fuchs M."/>
            <person name="Duesterhoeft A."/>
            <person name="Fritzc C."/>
            <person name="Holzer E."/>
            <person name="Moestl D."/>
            <person name="Hilbert H."/>
            <person name="Borzym K."/>
            <person name="Langer I."/>
            <person name="Beck A."/>
            <person name="Lehrach H."/>
            <person name="Reinhardt R."/>
            <person name="Pohl T.M."/>
            <person name="Eger P."/>
            <person name="Zimmermann W."/>
            <person name="Wedler H."/>
            <person name="Wambutt R."/>
            <person name="Purnelle B."/>
            <person name="Goffeau A."/>
            <person name="Cadieu E."/>
            <person name="Dreano S."/>
            <person name="Gloux S."/>
            <person name="Lelaure V."/>
            <person name="Mottier S."/>
            <person name="Galibert F."/>
            <person name="Aves S.J."/>
            <person name="Xiang Z."/>
            <person name="Hunt C."/>
            <person name="Moore K."/>
            <person name="Hurst S.M."/>
            <person name="Lucas M."/>
            <person name="Rochet M."/>
            <person name="Gaillardin C."/>
            <person name="Tallada V.A."/>
            <person name="Garzon A."/>
            <person name="Thode G."/>
            <person name="Daga R.R."/>
            <person name="Cruzado L."/>
            <person name="Jimenez J."/>
            <person name="Sanchez M."/>
            <person name="del Rey F."/>
            <person name="Benito J."/>
            <person name="Dominguez A."/>
            <person name="Revuelta J.L."/>
            <person name="Moreno S."/>
            <person name="Armstrong J."/>
            <person name="Forsburg S.L."/>
            <person name="Cerutti L."/>
            <person name="Lowe T."/>
            <person name="McCombie W.R."/>
            <person name="Paulsen I."/>
            <person name="Potashkin J."/>
            <person name="Shpakovski G.V."/>
            <person name="Ussery D."/>
            <person name="Barrell B.G."/>
            <person name="Nurse P."/>
        </authorList>
    </citation>
    <scope>NUCLEOTIDE SEQUENCE [LARGE SCALE GENOMIC DNA]</scope>
    <source>
        <strain>972 / ATCC 24843</strain>
    </source>
</reference>
<reference key="3">
    <citation type="journal article" date="2011" name="Science">
        <title>Comparative functional genomics of the fission yeasts.</title>
        <authorList>
            <person name="Rhind N."/>
            <person name="Chen Z."/>
            <person name="Yassour M."/>
            <person name="Thompson D.A."/>
            <person name="Haas B.J."/>
            <person name="Habib N."/>
            <person name="Wapinski I."/>
            <person name="Roy S."/>
            <person name="Lin M.F."/>
            <person name="Heiman D.I."/>
            <person name="Young S.K."/>
            <person name="Furuya K."/>
            <person name="Guo Y."/>
            <person name="Pidoux A."/>
            <person name="Chen H.M."/>
            <person name="Robbertse B."/>
            <person name="Goldberg J.M."/>
            <person name="Aoki K."/>
            <person name="Bayne E.H."/>
            <person name="Berlin A.M."/>
            <person name="Desjardins C.A."/>
            <person name="Dobbs E."/>
            <person name="Dukaj L."/>
            <person name="Fan L."/>
            <person name="FitzGerald M.G."/>
            <person name="French C."/>
            <person name="Gujja S."/>
            <person name="Hansen K."/>
            <person name="Keifenheim D."/>
            <person name="Levin J.Z."/>
            <person name="Mosher R.A."/>
            <person name="Mueller C.A."/>
            <person name="Pfiffner J."/>
            <person name="Priest M."/>
            <person name="Russ C."/>
            <person name="Smialowska A."/>
            <person name="Swoboda P."/>
            <person name="Sykes S.M."/>
            <person name="Vaughn M."/>
            <person name="Vengrova S."/>
            <person name="Yoder R."/>
            <person name="Zeng Q."/>
            <person name="Allshire R."/>
            <person name="Baulcombe D."/>
            <person name="Birren B.W."/>
            <person name="Brown W."/>
            <person name="Ekwall K."/>
            <person name="Kellis M."/>
            <person name="Leatherwood J."/>
            <person name="Levin H."/>
            <person name="Margalit H."/>
            <person name="Martienssen R."/>
            <person name="Nieduszynski C.A."/>
            <person name="Spatafora J.W."/>
            <person name="Friedman N."/>
            <person name="Dalgaard J.Z."/>
            <person name="Baumann P."/>
            <person name="Niki H."/>
            <person name="Regev A."/>
            <person name="Nusbaum C."/>
        </authorList>
    </citation>
    <scope>REVISION OF GENE MODEL</scope>
</reference>
<reference key="4">
    <citation type="journal article" date="2003" name="Genetics">
        <title>Rho3p regulates cell separation by modulating exocyst function in Schizosaccharomyces pombe.</title>
        <authorList>
            <person name="Wang H."/>
            <person name="Tang X."/>
            <person name="Balasubramanian M.K."/>
        </authorList>
    </citation>
    <scope>FUNCTION</scope>
</reference>
<reference key="5">
    <citation type="journal article" date="2005" name="J. Cell Sci.">
        <title>Endocytosis in fission yeast is spatially associated with the actin cytoskeleton during polarised cell growth and cytokinesis.</title>
        <authorList>
            <person name="Gachet Y."/>
            <person name="Hyams J.S."/>
        </authorList>
    </citation>
    <scope>SUBCELLULAR LOCATION</scope>
</reference>
<reference key="6">
    <citation type="journal article" date="2005" name="Mol. Biol. Cell">
        <title>Role of septins and the exocyst complex in the function of hydrolytic enzymes responsible for fission yeast cell separation.</title>
        <authorList>
            <person name="Martin-Cuadrado A.B."/>
            <person name="Morrell J.L."/>
            <person name="Konomi M."/>
            <person name="An H."/>
            <person name="Petit C.S."/>
            <person name="Osumi M."/>
            <person name="Balasubramanian M."/>
            <person name="Gould K.L."/>
            <person name="Del Rey F."/>
            <person name="Vazquez de Aldana C.R."/>
        </authorList>
    </citation>
    <scope>FUNCTION</scope>
</reference>
<reference key="7">
    <citation type="journal article" date="2006" name="Genetics">
        <title>A role for the septation initiation network in septum assembly revealed by genetic analysis of sid2-250 suppressors.</title>
        <authorList>
            <person name="Jin Q.W."/>
            <person name="Zhou M."/>
            <person name="Bimbo A."/>
            <person name="Balasubramanian M.K."/>
            <person name="McCollum D."/>
        </authorList>
    </citation>
    <scope>FUNCTION</scope>
</reference>
<reference key="8">
    <citation type="journal article" date="2006" name="Nat. Biotechnol.">
        <title>ORFeome cloning and global analysis of protein localization in the fission yeast Schizosaccharomyces pombe.</title>
        <authorList>
            <person name="Matsuyama A."/>
            <person name="Arai R."/>
            <person name="Yashiroda Y."/>
            <person name="Shirai A."/>
            <person name="Kamata A."/>
            <person name="Sekido S."/>
            <person name="Kobayashi Y."/>
            <person name="Hashimoto A."/>
            <person name="Hamamoto M."/>
            <person name="Hiraoka Y."/>
            <person name="Horinouchi S."/>
            <person name="Yoshida M."/>
        </authorList>
    </citation>
    <scope>SUBCELLULAR LOCATION [LARGE SCALE ANALYSIS]</scope>
</reference>
<reference key="9">
    <citation type="journal article" date="2008" name="J. Proteome Res.">
        <title>Phosphoproteome analysis of fission yeast.</title>
        <authorList>
            <person name="Wilson-Grady J.T."/>
            <person name="Villen J."/>
            <person name="Gygi S.P."/>
        </authorList>
    </citation>
    <scope>PHOSPHORYLATION [LARGE SCALE ANALYSIS] AT THR-449 AND SER-450</scope>
    <scope>IDENTIFICATION BY MASS SPECTROMETRY</scope>
</reference>
<reference key="10">
    <citation type="journal article" date="2011" name="Mol. Biol. Cell">
        <title>Actin cables and the exocyst form two independent morphogenesis pathways in the fission yeast.</title>
        <authorList>
            <person name="Bendezu F.O."/>
            <person name="Martin S.G."/>
        </authorList>
    </citation>
    <scope>SUBCELLULAR LOCATION</scope>
    <scope>FUNCTION OF THE EXOCYST COMPLEX</scope>
</reference>